<gene>
    <name evidence="5" type="primary">CPS5</name>
</gene>
<comment type="function">
    <text evidence="3 4">Catalyzes the conversion of geranylgeranyl diphosphate (GGPP) to the gibberellin precursor ent-copalyl diphosphate (CPP).</text>
</comment>
<comment type="catalytic activity">
    <reaction evidence="3 4">
        <text>(2E,6E,10E)-geranylgeranyl diphosphate = ent-copalyl diphosphate</text>
        <dbReference type="Rhea" id="RHEA:14841"/>
        <dbReference type="ChEBI" id="CHEBI:58553"/>
        <dbReference type="ChEBI" id="CHEBI:58756"/>
        <dbReference type="EC" id="5.5.1.13"/>
    </reaction>
    <physiologicalReaction direction="left-to-right" evidence="3 4">
        <dbReference type="Rhea" id="RHEA:14842"/>
    </physiologicalReaction>
</comment>
<comment type="cofactor">
    <cofactor evidence="7">
        <name>Mg(2+)</name>
        <dbReference type="ChEBI" id="CHEBI:18420"/>
    </cofactor>
</comment>
<comment type="pathway">
    <text evidence="7">Plant hormone biosynthesis; gibberellin biosynthesis.</text>
</comment>
<comment type="subcellular location">
    <subcellularLocation>
        <location evidence="2">Plastid</location>
        <location evidence="2">Chloroplast</location>
    </subcellularLocation>
</comment>
<comment type="domain">
    <text evidence="7">The Asp-Xaa-Asp-Asp (DXDD) motif is important for the catalytic activity, presumably through binding to Mg(2+).</text>
</comment>
<comment type="similarity">
    <text evidence="7">Belongs to the terpene synthase family.</text>
</comment>
<reference key="1">
    <citation type="journal article" date="2015" name="Plant Physiol.">
        <title>Functional divergence of diterpene syntheses in the medicinal plant Salvia miltiorrhiza.</title>
        <authorList>
            <person name="Cui G."/>
            <person name="Duan L."/>
            <person name="Jin B."/>
            <person name="Qian J."/>
            <person name="Xue Z."/>
            <person name="Shen G."/>
            <person name="Snyder J.H."/>
            <person name="Song J."/>
            <person name="Chen S."/>
            <person name="Huang L."/>
            <person name="Peters R.J."/>
            <person name="Qi X."/>
        </authorList>
    </citation>
    <scope>NUCLEOTIDE SEQUENCE [MRNA]</scope>
    <scope>FUNCTION</scope>
    <scope>CATALYTIC ACTIVITY</scope>
</reference>
<reference key="2">
    <citation type="journal article" date="2016" name="Sci. Rep.">
        <title>Functional characterization of ent-copalyl diphosphate synthase, kaurene synthase and kaurene oxidase in the Salvia miltiorrhiza gibberellin biosynthetic pathway.</title>
        <authorList>
            <person name="Su P."/>
            <person name="Tong Y."/>
            <person name="Cheng Q."/>
            <person name="Hu Y."/>
            <person name="Zhang M."/>
            <person name="Yang J."/>
            <person name="Teng Z."/>
            <person name="Gao W."/>
            <person name="Huang L."/>
        </authorList>
    </citation>
    <scope>NUCLEOTIDE SEQUENCE [MRNA]</scope>
    <scope>FUNCTION</scope>
    <scope>CATALYTIC ACTIVITY</scope>
</reference>
<reference key="3">
    <citation type="submission" date="2012-06" db="EMBL/GenBank/DDBJ databases">
        <title>Functional identification of copalyl diphosphate synthase and its role in initiating biosynthesis of diterpenoid natural products in Salvia miltiorrhiza.</title>
        <authorList>
            <person name="Huang L."/>
            <person name="Gao W."/>
            <person name="He Y."/>
            <person name="Yuan Y."/>
            <person name="Shen Y."/>
            <person name="Cheng Q."/>
        </authorList>
    </citation>
    <scope>NUCLEOTIDE SEQUENCE [MRNA]</scope>
</reference>
<sequence>MPLASNPVAFLPSSTAHGDLPAAAFSRSSAGCLQLCRPLTPTSSLQCNAISRPRTEEYIDVIQNGLPVIKWHEIVEDDAEKDSPKDKVGELRDAVRSMLRSMGDGEISISPYDTAWVALVADADGDRPQFPSSLHWISTNQLADGSWGDHATFSIFDRIINTLACVVALTSWDLHPDKTHKGILFIKKNIHRLEEENVEHMPIGFEVALPSLIDIAKQLQIDIPSDTRGLREIYARREIKLKKIPSDILHQMPTTLLHSLEGMPGLMWQKLLKLQSEDGSFLFSPSSTAFALQQTKDHNCLKYLTNHLIKFKGGVPNVYPVDLFEHLWAVDRLQRLGVSRYFQPEIEECVAYVYRYWTEKGICWARNSEIQDIDDTAMGFRLLRLHGYEVSADVFKHFESGGEFFCFKGQSTQAVTGMYNLYRAAQLIFPGENILEDAATFSAKFLQQKRANNELLDKWIITKDLPGEVGYALDVPWYASLPRVETRFYLEQYGGEDDVWIGKTLYRMPYVNNNKYLELAKLDYNNCQALHQQEWKDIQKWYRNSSLGEFGLSEGSLVQAYYVAAASIFEPQKSQERLAWAKTAILMQTITSHFHHSAEQKRVFLHEFQHATGGRYKTTRTLVGTLLRTLNQLSLDILLAHGCHIHQPLKNAWHKWIKTWEGGGGGAELLVQTLNLCGGGRRNRWESEELLSSHPKYEHLLKATVGVCDKLRRFQHRKDCNGCMGSDGGIRMLDIEAGMQELVKLVVTKSPGDLDSEIKQNFFMIARSYYYAAYCNPGTINFHIAKVLFERVQ</sequence>
<accession>A0A0U3LQ20</accession>
<accession>A0A0A7ANR2</accession>
<accession>V9MGN6</accession>
<evidence type="ECO:0000250" key="1">
    <source>
        <dbReference type="UniProtKB" id="C7BKP9"/>
    </source>
</evidence>
<evidence type="ECO:0000255" key="2"/>
<evidence type="ECO:0000269" key="3">
    <source>
    </source>
</evidence>
<evidence type="ECO:0000269" key="4">
    <source>
    </source>
</evidence>
<evidence type="ECO:0000303" key="5">
    <source>
    </source>
</evidence>
<evidence type="ECO:0000303" key="6">
    <source>
    </source>
</evidence>
<evidence type="ECO:0000305" key="7"/>
<protein>
    <recommendedName>
        <fullName evidence="6">Ent-copalyl diphosphate synthase, chloroplastic</fullName>
        <shortName evidence="6">SmCPSent</shortName>
        <ecNumber evidence="3">5.5.1.13</ecNumber>
    </recommendedName>
</protein>
<feature type="transit peptide" description="Chloroplast" evidence="2">
    <location>
        <begin position="1"/>
        <end position="47"/>
    </location>
</feature>
<feature type="chain" id="PRO_0000449935" description="Ent-copalyl diphosphate synthase, chloroplastic">
    <location>
        <begin position="48"/>
        <end position="793"/>
    </location>
</feature>
<feature type="short sequence motif" description="DXDD motif" evidence="7">
    <location>
        <begin position="372"/>
        <end position="375"/>
    </location>
</feature>
<feature type="binding site" evidence="1">
    <location>
        <position position="372"/>
    </location>
    <ligand>
        <name>Mg(2+)</name>
        <dbReference type="ChEBI" id="CHEBI:18420"/>
    </ligand>
</feature>
<feature type="binding site" evidence="1">
    <location>
        <position position="374"/>
    </location>
    <ligand>
        <name>Mg(2+)</name>
        <dbReference type="ChEBI" id="CHEBI:18420"/>
    </ligand>
</feature>
<feature type="sequence conflict" description="In Ref. 3; AGF69544." evidence="7" ref="3">
    <original>P</original>
    <variation>S</variation>
    <location>
        <position position="253"/>
    </location>
</feature>
<feature type="sequence conflict" description="In Ref. 3; AGF69544." evidence="7" ref="3">
    <original>V</original>
    <variation>A</variation>
    <location>
        <position position="499"/>
    </location>
</feature>
<feature type="sequence conflict" description="In Ref. 3; AGF69544." evidence="7" ref="3">
    <original>T</original>
    <variation>A</variation>
    <location>
        <position position="612"/>
    </location>
</feature>
<feature type="sequence conflict" description="In Ref. 1; AHJ59324 and 3; AGF69544." evidence="7" ref="1 3">
    <original>H</original>
    <variation>Q</variation>
    <location>
        <position position="699"/>
    </location>
</feature>
<feature type="sequence conflict" description="In Ref. 3; AGF69544." evidence="7" ref="3">
    <original>H</original>
    <variation>R</variation>
    <location>
        <position position="716"/>
    </location>
</feature>
<feature type="sequence conflict" description="In Ref. 1; AHJ59324 and 3; AGF69544." evidence="7" ref="1 3">
    <original>M</original>
    <variation>T</variation>
    <location>
        <position position="732"/>
    </location>
</feature>
<feature type="sequence conflict" description="In Ref. 1; AHJ59324." evidence="7" ref="1">
    <original>G</original>
    <variation>E</variation>
    <location>
        <position position="738"/>
    </location>
</feature>
<organism>
    <name type="scientific">Salvia miltiorrhiza</name>
    <name type="common">Chinese sage</name>
    <dbReference type="NCBI Taxonomy" id="226208"/>
    <lineage>
        <taxon>Eukaryota</taxon>
        <taxon>Viridiplantae</taxon>
        <taxon>Streptophyta</taxon>
        <taxon>Embryophyta</taxon>
        <taxon>Tracheophyta</taxon>
        <taxon>Spermatophyta</taxon>
        <taxon>Magnoliopsida</taxon>
        <taxon>eudicotyledons</taxon>
        <taxon>Gunneridae</taxon>
        <taxon>Pentapetalae</taxon>
        <taxon>asterids</taxon>
        <taxon>lamiids</taxon>
        <taxon>Lamiales</taxon>
        <taxon>Lamiaceae</taxon>
        <taxon>Nepetoideae</taxon>
        <taxon>Mentheae</taxon>
        <taxon>Salviinae</taxon>
        <taxon>Salvia</taxon>
        <taxon>Salvia incertae sedis</taxon>
    </lineage>
</organism>
<dbReference type="EC" id="5.5.1.13" evidence="3"/>
<dbReference type="EMBL" id="KC814642">
    <property type="protein sequence ID" value="AHJ59324.1"/>
    <property type="molecule type" value="mRNA"/>
</dbReference>
<dbReference type="EMBL" id="KT934789">
    <property type="protein sequence ID" value="ALX18648.1"/>
    <property type="molecule type" value="mRNA"/>
</dbReference>
<dbReference type="EMBL" id="JX156302">
    <property type="protein sequence ID" value="AGF69544.1"/>
    <property type="molecule type" value="mRNA"/>
</dbReference>
<dbReference type="SMR" id="A0A0U3LQ20"/>
<dbReference type="UniPathway" id="UPA00390"/>
<dbReference type="GO" id="GO:0009507">
    <property type="term" value="C:chloroplast"/>
    <property type="evidence" value="ECO:0007669"/>
    <property type="project" value="UniProtKB-SubCell"/>
</dbReference>
<dbReference type="GO" id="GO:0009905">
    <property type="term" value="F:ent-copalyl diphosphate synthase activity"/>
    <property type="evidence" value="ECO:0007669"/>
    <property type="project" value="UniProtKB-EC"/>
</dbReference>
<dbReference type="GO" id="GO:0000287">
    <property type="term" value="F:magnesium ion binding"/>
    <property type="evidence" value="ECO:0007669"/>
    <property type="project" value="InterPro"/>
</dbReference>
<dbReference type="GO" id="GO:0010333">
    <property type="term" value="F:terpene synthase activity"/>
    <property type="evidence" value="ECO:0007669"/>
    <property type="project" value="InterPro"/>
</dbReference>
<dbReference type="GO" id="GO:0009686">
    <property type="term" value="P:gibberellin biosynthetic process"/>
    <property type="evidence" value="ECO:0007669"/>
    <property type="project" value="UniProtKB-UniPathway"/>
</dbReference>
<dbReference type="CDD" id="cd00684">
    <property type="entry name" value="Terpene_cyclase_plant_C1"/>
    <property type="match status" value="1"/>
</dbReference>
<dbReference type="FunFam" id="1.50.10.160:FF:000001">
    <property type="entry name" value="Ent-copalyl diphosphate synthase"/>
    <property type="match status" value="1"/>
</dbReference>
<dbReference type="FunFam" id="1.50.10.130:FF:000002">
    <property type="entry name" value="Ent-copalyl diphosphate synthase, chloroplastic"/>
    <property type="match status" value="1"/>
</dbReference>
<dbReference type="Gene3D" id="1.50.10.160">
    <property type="match status" value="1"/>
</dbReference>
<dbReference type="Gene3D" id="1.10.600.10">
    <property type="entry name" value="Farnesyl Diphosphate Synthase"/>
    <property type="match status" value="1"/>
</dbReference>
<dbReference type="Gene3D" id="1.50.10.130">
    <property type="entry name" value="Terpene synthase, N-terminal domain"/>
    <property type="match status" value="1"/>
</dbReference>
<dbReference type="InterPro" id="IPR008949">
    <property type="entry name" value="Isoprenoid_synthase_dom_sf"/>
</dbReference>
<dbReference type="InterPro" id="IPR044814">
    <property type="entry name" value="Terpene_cyclase_plant_C1"/>
</dbReference>
<dbReference type="InterPro" id="IPR001906">
    <property type="entry name" value="Terpene_synth_N"/>
</dbReference>
<dbReference type="InterPro" id="IPR036965">
    <property type="entry name" value="Terpene_synth_N_sf"/>
</dbReference>
<dbReference type="InterPro" id="IPR050148">
    <property type="entry name" value="Terpene_synthase-like"/>
</dbReference>
<dbReference type="InterPro" id="IPR005630">
    <property type="entry name" value="Terpene_synthase_metal-bd"/>
</dbReference>
<dbReference type="InterPro" id="IPR008930">
    <property type="entry name" value="Terpenoid_cyclase/PrenylTrfase"/>
</dbReference>
<dbReference type="PANTHER" id="PTHR31739">
    <property type="entry name" value="ENT-COPALYL DIPHOSPHATE SYNTHASE, CHLOROPLASTIC"/>
    <property type="match status" value="1"/>
</dbReference>
<dbReference type="PANTHER" id="PTHR31739:SF4">
    <property type="entry name" value="ENT-COPALYL DIPHOSPHATE SYNTHASE, CHLOROPLASTIC"/>
    <property type="match status" value="1"/>
</dbReference>
<dbReference type="Pfam" id="PF01397">
    <property type="entry name" value="Terpene_synth"/>
    <property type="match status" value="1"/>
</dbReference>
<dbReference type="Pfam" id="PF03936">
    <property type="entry name" value="Terpene_synth_C"/>
    <property type="match status" value="1"/>
</dbReference>
<dbReference type="SFLD" id="SFLDG01014">
    <property type="entry name" value="Terpene_Cyclase_Like_1_N-term"/>
    <property type="match status" value="1"/>
</dbReference>
<dbReference type="SFLD" id="SFLDG01605">
    <property type="entry name" value="Terpene_Cyclase_Like_1_N-term"/>
    <property type="match status" value="1"/>
</dbReference>
<dbReference type="SUPFAM" id="SSF48239">
    <property type="entry name" value="Terpenoid cyclases/Protein prenyltransferases"/>
    <property type="match status" value="2"/>
</dbReference>
<dbReference type="SUPFAM" id="SSF48576">
    <property type="entry name" value="Terpenoid synthases"/>
    <property type="match status" value="1"/>
</dbReference>
<proteinExistence type="evidence at protein level"/>
<name>CPS5_SALMI</name>
<keyword id="KW-0150">Chloroplast</keyword>
<keyword id="KW-0413">Isomerase</keyword>
<keyword id="KW-0460">Magnesium</keyword>
<keyword id="KW-0479">Metal-binding</keyword>
<keyword id="KW-0934">Plastid</keyword>
<keyword id="KW-0809">Transit peptide</keyword>